<accession>P62928</accession>
<accession>P08687</accession>
<accession>Q40999</accession>
<accession>Q7XZC0</accession>
<accession>Q9M3X4</accession>
<name>ALB1C_PEA</name>
<protein>
    <recommendedName>
        <fullName>Albumin-1 C</fullName>
    </recommendedName>
    <alternativeName>
        <fullName>PA1 C</fullName>
    </alternativeName>
    <alternativeName>
        <fullName>PsaA1b015</fullName>
    </alternativeName>
    <component>
        <recommendedName>
            <fullName>Albumin-1 C chain b</fullName>
        </recommendedName>
        <alternativeName>
            <fullName>Leginsulin C</fullName>
        </alternativeName>
        <alternativeName>
            <fullName>PA1b C</fullName>
        </alternativeName>
    </component>
    <component>
        <recommendedName>
            <fullName>Albumin-1 C chain a</fullName>
        </recommendedName>
        <alternativeName>
            <fullName>PA1a C</fullName>
        </alternativeName>
    </component>
</protein>
<feature type="signal peptide" evidence="3">
    <location>
        <begin position="1"/>
        <end position="26"/>
    </location>
</feature>
<feature type="chain" id="PRO_0000032223" description="Albumin-1 C chain b">
    <location>
        <begin position="27"/>
        <end position="63"/>
    </location>
</feature>
<feature type="propeptide" id="PRO_0000032224">
    <location>
        <begin position="64"/>
        <end position="69"/>
    </location>
</feature>
<feature type="chain" id="PRO_0000032225" description="Albumin-1 C chain a">
    <location>
        <begin position="70"/>
        <end position="122"/>
    </location>
</feature>
<feature type="propeptide" id="PRO_0000032226" evidence="2">
    <location>
        <begin position="123"/>
        <end position="130"/>
    </location>
</feature>
<feature type="disulfide bond" evidence="1">
    <location>
        <begin position="29"/>
        <end position="46"/>
    </location>
</feature>
<feature type="disulfide bond" evidence="1">
    <location>
        <begin position="33"/>
        <end position="48"/>
    </location>
</feature>
<feature type="disulfide bond" evidence="1">
    <location>
        <begin position="41"/>
        <end position="58"/>
    </location>
</feature>
<feature type="sequence conflict" description="In Ref. 2; AA sequence." evidence="4" ref="2">
    <original>N</original>
    <variation>H</variation>
    <location>
        <position position="60"/>
    </location>
</feature>
<comment type="function">
    <text evidence="1">PA1b binds to basic 7S globulin (BG) and stimulates its phosphorylation activity. Involved in the signal transduction system to regulate the growth and differentiation as a hormone peptide. Toxic to various insects through binding to a high affinity binding site in the insect gut (By similarity).</text>
</comment>
<comment type="tissue specificity">
    <text evidence="3">Major component of both the cotyledons and embryonic axes of mature seeds.</text>
</comment>
<comment type="developmental stage">
    <text evidence="3">Increasing expression during seed development followed by a rapid degradation during the first days of seed germination.</text>
</comment>
<comment type="domain">
    <text evidence="1">The presence of a 'disulfide through disulfide knot' structurally defines this protein as a knottin.</text>
</comment>
<comment type="PTM">
    <text>The C-terminal glycine may be removed from PA1b.</text>
</comment>
<comment type="miscellaneous">
    <text>The protein sequenced in PubMed:3755437 was probably a mixture of the products of genes C and D, PA1b being of C origin while PA1a is of D origin.</text>
</comment>
<organism>
    <name type="scientific">Pisum sativum</name>
    <name type="common">Garden pea</name>
    <name type="synonym">Lathyrus oleraceus</name>
    <dbReference type="NCBI Taxonomy" id="3888"/>
    <lineage>
        <taxon>Eukaryota</taxon>
        <taxon>Viridiplantae</taxon>
        <taxon>Streptophyta</taxon>
        <taxon>Embryophyta</taxon>
        <taxon>Tracheophyta</taxon>
        <taxon>Spermatophyta</taxon>
        <taxon>Magnoliopsida</taxon>
        <taxon>eudicotyledons</taxon>
        <taxon>Gunneridae</taxon>
        <taxon>Pentapetalae</taxon>
        <taxon>rosids</taxon>
        <taxon>fabids</taxon>
        <taxon>Fabales</taxon>
        <taxon>Fabaceae</taxon>
        <taxon>Papilionoideae</taxon>
        <taxon>50 kb inversion clade</taxon>
        <taxon>NPAAA clade</taxon>
        <taxon>Hologalegina</taxon>
        <taxon>IRL clade</taxon>
        <taxon>Fabeae</taxon>
        <taxon>Pisum</taxon>
    </lineage>
</organism>
<evidence type="ECO:0000250" key="1"/>
<evidence type="ECO:0000255" key="2"/>
<evidence type="ECO:0000269" key="3">
    <source>
    </source>
</evidence>
<evidence type="ECO:0000305" key="4"/>
<keyword id="KW-0903">Direct protein sequencing</keyword>
<keyword id="KW-1015">Disulfide bond</keyword>
<keyword id="KW-0960">Knottin</keyword>
<keyword id="KW-0708">Seed storage protein</keyword>
<keyword id="KW-0732">Signal</keyword>
<keyword id="KW-0758">Storage protein</keyword>
<keyword id="KW-0800">Toxin</keyword>
<dbReference type="EMBL" id="AJ574796">
    <property type="protein sequence ID" value="CAE00468.1"/>
    <property type="molecule type" value="Genomic_DNA"/>
</dbReference>
<dbReference type="SMR" id="P62928"/>
<dbReference type="GO" id="GO:0045735">
    <property type="term" value="F:nutrient reservoir activity"/>
    <property type="evidence" value="ECO:0007669"/>
    <property type="project" value="UniProtKB-KW"/>
</dbReference>
<dbReference type="GO" id="GO:0090729">
    <property type="term" value="F:toxin activity"/>
    <property type="evidence" value="ECO:0007669"/>
    <property type="project" value="UniProtKB-KW"/>
</dbReference>
<dbReference type="InterPro" id="IPR012512">
    <property type="entry name" value="Albumin_I"/>
</dbReference>
<dbReference type="InterPro" id="IPR032000">
    <property type="entry name" value="Albumin_I_a"/>
</dbReference>
<dbReference type="Pfam" id="PF08027">
    <property type="entry name" value="Albumin_I"/>
    <property type="match status" value="1"/>
</dbReference>
<dbReference type="Pfam" id="PF16720">
    <property type="entry name" value="Albumin_I_a"/>
    <property type="match status" value="1"/>
</dbReference>
<dbReference type="SUPFAM" id="SSF57059">
    <property type="entry name" value="omega toxin-like"/>
    <property type="match status" value="1"/>
</dbReference>
<reference key="1">
    <citation type="journal article" date="2004" name="Plant Sci.">
        <title>Molecular and biological screening for insect-toxic seed albumins from four legume species.</title>
        <authorList>
            <person name="Louis S."/>
            <person name="Delobel B."/>
            <person name="Gressent F."/>
            <person name="Rahioui I."/>
            <person name="Quillien L."/>
            <person name="Vallier A."/>
            <person name="Rahbe Y."/>
        </authorList>
        <dbReference type="AGRICOLA" id="IND43645431"/>
    </citation>
    <scope>NUCLEOTIDE SEQUENCE [GENOMIC DNA]</scope>
    <source>
        <strain>cv. Frisson</strain>
        <tissue>Seed</tissue>
    </source>
</reference>
<reference key="2">
    <citation type="journal article" date="1986" name="J. Biol. Chem.">
        <title>Gene structure, protein structure, and regulation of the synthesis of a sulfur-rich protein in pea seeds.</title>
        <authorList>
            <person name="Higgins T.J.V."/>
            <person name="Chandler P.M."/>
            <person name="Randall P.J."/>
            <person name="Spencer D."/>
            <person name="Beach L.R."/>
            <person name="Blagrove R.J."/>
            <person name="Kortt A.A."/>
            <person name="Inglis A.S."/>
        </authorList>
    </citation>
    <scope>PROTEIN SEQUENCE OF 27-63</scope>
    <scope>DEVELOPMENTAL STAGE</scope>
    <scope>TISSUE SPECIFICITY</scope>
    <source>
        <tissue>Seed</tissue>
    </source>
</reference>
<sequence>MASVKLASLIVLFATLGMFLTKNVGAISCNGVCSPFDIPPCGSPLCRCIPAGLVIGNCRNPYGVFLRTNDEHPNLCESDADCRKKGSGTFCGHYPNPDIEYGWCFASKSEAEDVFSKITPKDLLKSVSTA</sequence>
<proteinExistence type="evidence at protein level"/>